<feature type="initiator methionine" description="Removed" evidence="2">
    <location>
        <position position="1"/>
    </location>
</feature>
<feature type="chain" id="PRO_0000135036" description="Rubredoxin-2">
    <location>
        <begin position="2"/>
        <end position="62"/>
    </location>
</feature>
<feature type="domain" description="Rubredoxin-like" evidence="1">
    <location>
        <begin position="7"/>
        <end position="58"/>
    </location>
</feature>
<feature type="binding site" evidence="1">
    <location>
        <position position="10"/>
    </location>
    <ligand>
        <name>Fe cation</name>
        <dbReference type="ChEBI" id="CHEBI:24875"/>
    </ligand>
</feature>
<feature type="binding site" evidence="1">
    <location>
        <position position="15"/>
    </location>
    <ligand>
        <name>Fe cation</name>
        <dbReference type="ChEBI" id="CHEBI:24875"/>
    </ligand>
</feature>
<feature type="binding site" evidence="1">
    <location>
        <position position="45"/>
    </location>
    <ligand>
        <name>Fe cation</name>
        <dbReference type="ChEBI" id="CHEBI:24875"/>
    </ligand>
</feature>
<feature type="binding site" evidence="1">
    <location>
        <position position="48"/>
    </location>
    <ligand>
        <name>Fe cation</name>
        <dbReference type="ChEBI" id="CHEBI:24875"/>
    </ligand>
</feature>
<proteinExistence type="evidence at protein level"/>
<evidence type="ECO:0000255" key="1">
    <source>
        <dbReference type="PROSITE-ProRule" id="PRU00241"/>
    </source>
</evidence>
<evidence type="ECO:0000269" key="2">
    <source>
    </source>
</evidence>
<evidence type="ECO:0000305" key="3"/>
<keyword id="KW-0903">Direct protein sequencing</keyword>
<keyword id="KW-0249">Electron transport</keyword>
<keyword id="KW-0408">Iron</keyword>
<keyword id="KW-0479">Metal-binding</keyword>
<keyword id="KW-0813">Transport</keyword>
<protein>
    <recommendedName>
        <fullName>Rubredoxin-2</fullName>
        <shortName>Rd-2</shortName>
    </recommendedName>
</protein>
<comment type="function">
    <text>Rubredoxin is a small nonheme, iron protein lacking acid-labile sulfide. Its single Fe, chelated to 4 Cys, functions as an electron acceptor and may also stabilize the conformation of the molecule.</text>
</comment>
<comment type="cofactor">
    <cofactor evidence="2">
        <name>Fe(3+)</name>
        <dbReference type="ChEBI" id="CHEBI:29034"/>
    </cofactor>
    <text evidence="2">Binds 1 Fe(3+) ion per subunit.</text>
</comment>
<comment type="subunit">
    <text evidence="2">Monomer.</text>
</comment>
<comment type="miscellaneous">
    <text evidence="2">The midpoint reduction potential is 25 mV.</text>
</comment>
<comment type="similarity">
    <text evidence="3">Belongs to the rubredoxin family.</text>
</comment>
<accession>Q93PP8</accession>
<accession>B8J0L1</accession>
<name>RUBR2_DESDA</name>
<dbReference type="EMBL" id="AF321851">
    <property type="protein sequence ID" value="AAK60121.1"/>
    <property type="molecule type" value="Genomic_DNA"/>
</dbReference>
<dbReference type="EMBL" id="CP001358">
    <property type="protein sequence ID" value="ACL49288.1"/>
    <property type="molecule type" value="Genomic_DNA"/>
</dbReference>
<dbReference type="SMR" id="Q93PP8"/>
<dbReference type="STRING" id="525146.Ddes_1386"/>
<dbReference type="KEGG" id="dds:Ddes_1386"/>
<dbReference type="eggNOG" id="COG1773">
    <property type="taxonomic scope" value="Bacteria"/>
</dbReference>
<dbReference type="HOGENOM" id="CLU_128747_3_2_7"/>
<dbReference type="GO" id="GO:0009055">
    <property type="term" value="F:electron transfer activity"/>
    <property type="evidence" value="ECO:0000303"/>
    <property type="project" value="UniProtKB"/>
</dbReference>
<dbReference type="GO" id="GO:0008199">
    <property type="term" value="F:ferric iron binding"/>
    <property type="evidence" value="ECO:0000314"/>
    <property type="project" value="UniProtKB"/>
</dbReference>
<dbReference type="GO" id="GO:0043448">
    <property type="term" value="P:alkane catabolic process"/>
    <property type="evidence" value="ECO:0007669"/>
    <property type="project" value="TreeGrafter"/>
</dbReference>
<dbReference type="GO" id="GO:0022900">
    <property type="term" value="P:electron transport chain"/>
    <property type="evidence" value="ECO:0000314"/>
    <property type="project" value="UniProtKB"/>
</dbReference>
<dbReference type="CDD" id="cd00730">
    <property type="entry name" value="rubredoxin"/>
    <property type="match status" value="1"/>
</dbReference>
<dbReference type="FunFam" id="2.20.28.10:FF:000001">
    <property type="entry name" value="Rubredoxin"/>
    <property type="match status" value="1"/>
</dbReference>
<dbReference type="Gene3D" id="2.20.28.10">
    <property type="match status" value="1"/>
</dbReference>
<dbReference type="InterPro" id="IPR024922">
    <property type="entry name" value="Rubredoxin"/>
</dbReference>
<dbReference type="InterPro" id="IPR024934">
    <property type="entry name" value="Rubredoxin-like_dom"/>
</dbReference>
<dbReference type="InterPro" id="IPR024935">
    <property type="entry name" value="Rubredoxin_dom"/>
</dbReference>
<dbReference type="InterPro" id="IPR050526">
    <property type="entry name" value="Rubredoxin_ET"/>
</dbReference>
<dbReference type="InterPro" id="IPR018527">
    <property type="entry name" value="Rubredoxin_Fe_BS"/>
</dbReference>
<dbReference type="PANTHER" id="PTHR47627">
    <property type="entry name" value="RUBREDOXIN"/>
    <property type="match status" value="1"/>
</dbReference>
<dbReference type="PANTHER" id="PTHR47627:SF1">
    <property type="entry name" value="RUBREDOXIN-1-RELATED"/>
    <property type="match status" value="1"/>
</dbReference>
<dbReference type="Pfam" id="PF00301">
    <property type="entry name" value="Rubredoxin"/>
    <property type="match status" value="1"/>
</dbReference>
<dbReference type="PIRSF" id="PIRSF000071">
    <property type="entry name" value="Rubredoxin"/>
    <property type="match status" value="1"/>
</dbReference>
<dbReference type="PRINTS" id="PR00163">
    <property type="entry name" value="RUBREDOXIN"/>
</dbReference>
<dbReference type="SUPFAM" id="SSF57802">
    <property type="entry name" value="Rubredoxin-like"/>
    <property type="match status" value="1"/>
</dbReference>
<dbReference type="PROSITE" id="PS00202">
    <property type="entry name" value="RUBREDOXIN"/>
    <property type="match status" value="1"/>
</dbReference>
<dbReference type="PROSITE" id="PS50903">
    <property type="entry name" value="RUBREDOXIN_LIKE"/>
    <property type="match status" value="1"/>
</dbReference>
<organism>
    <name type="scientific">Desulfovibrio desulfuricans (strain ATCC 27774 / DSM 6949 / MB)</name>
    <dbReference type="NCBI Taxonomy" id="525146"/>
    <lineage>
        <taxon>Bacteria</taxon>
        <taxon>Pseudomonadati</taxon>
        <taxon>Thermodesulfobacteriota</taxon>
        <taxon>Desulfovibrionia</taxon>
        <taxon>Desulfovibrionales</taxon>
        <taxon>Desulfovibrionaceae</taxon>
        <taxon>Desulfovibrio</taxon>
    </lineage>
</organism>
<gene>
    <name type="primary">rd2</name>
    <name type="ordered locus">Ddes_1386</name>
</gene>
<reference evidence="3" key="1">
    <citation type="journal article" date="2001" name="Mol. Microbiol.">
        <title>The genetic organization of Desulfovibrio desulphuricans ATCC 27774 bacterioferritin and rubredoxin-2 genes: involvement of rubredoxin in iron metabolism.</title>
        <authorList>
            <person name="da Costa P.N."/>
            <person name="Romao C.V."/>
            <person name="LeGall J."/>
            <person name="Xavier A.V."/>
            <person name="Melo E."/>
            <person name="Teixeira M."/>
            <person name="Saraiva L.M."/>
        </authorList>
    </citation>
    <scope>NUCLEOTIDE SEQUENCE [GENOMIC DNA]</scope>
</reference>
<reference key="2">
    <citation type="submission" date="2009-01" db="EMBL/GenBank/DDBJ databases">
        <title>Complete sequence of Desulfovibrio desulfuricans subsp. desulfuricans str. ATCC 27774.</title>
        <authorList>
            <consortium name="US DOE Joint Genome Institute"/>
            <person name="Lucas S."/>
            <person name="Copeland A."/>
            <person name="Lapidus A."/>
            <person name="Glavina del Rio T."/>
            <person name="Tice H."/>
            <person name="Bruce D."/>
            <person name="Goodwin L."/>
            <person name="Pitluck S."/>
            <person name="Sims D."/>
            <person name="Lu M."/>
            <person name="Kiss H."/>
            <person name="Meineke L."/>
            <person name="Brettin T."/>
            <person name="Detter J.C."/>
            <person name="Han C."/>
            <person name="Larimer F."/>
            <person name="Land M."/>
            <person name="Hauser L."/>
            <person name="Kyrpides N."/>
            <person name="Ovchinnikova G."/>
            <person name="Hazen T.C."/>
        </authorList>
    </citation>
    <scope>NUCLEOTIDE SEQUENCE [LARGE SCALE GENOMIC DNA]</scope>
    <source>
        <strain>ATCC 27774 / DSM 6949 / MB</strain>
    </source>
</reference>
<reference evidence="3" key="3">
    <citation type="journal article" date="1998" name="FEBS Lett.">
        <title>Characterisation of a new rubredoxin isolated from Desulfovibrio desulfuricans 27774: definition of a new family of rubredoxins.</title>
        <authorList>
            <person name="LeGall J."/>
            <person name="Liu M.Y."/>
            <person name="Gomes C.M."/>
            <person name="Braga V."/>
            <person name="Pacheco I."/>
            <person name="Regalla M."/>
            <person name="Xavier A.V."/>
            <person name="Teixeira M."/>
        </authorList>
    </citation>
    <scope>PROTEIN SEQUENCE OF 2-40</scope>
    <scope>COFACTOR</scope>
    <scope>SUBUNIT</scope>
    <scope>REDOX POTENTIOMETRY</scope>
    <scope>ABSORPTION SPECTROSCOPY</scope>
    <scope>EPR SPECTROSCOPY</scope>
</reference>
<sequence>MAEPQDMWRCQMVNCGYVYDPDRGDKRRKVPAGTKFEDLPEDWRCPVCGAGKKSFRRLSDEA</sequence>